<feature type="chain" id="PRO_0000314274" description="RNA polymerase II holoenzyme cyclin-like subunit">
    <location>
        <begin position="1"/>
        <end position="345"/>
    </location>
</feature>
<feature type="domain" description="Cyclin N-terminal">
    <location>
        <begin position="23"/>
        <end position="147"/>
    </location>
</feature>
<gene>
    <name type="primary">SSN8</name>
    <name type="ordered locus">DEHA2A09878g</name>
</gene>
<sequence length="345" mass="39838">MSADFWSSSQRNRWQLTRHSLLESRRKLLLLEKKMIQNGFIKDYPNVEYDANTRIYLHNLLIKLGRRLNVRQIALATAEIYMSRFLIKVSLKEINVYLLVTTCLYAACKIEECPQHIRLITSEARNLWPEYIPQDVTKLAEFEFYLIEEMDSFLVLHHPYRSLLQIRDYLNENFALYGFSLSDDELQNSWSLINDSYITDLHLLLPPHIIAIATIYITIVLKKNISSLRLGANSMSNDTVGMDPHTKPNSNSIHAEDLMALATGGSAINDIGNPSSGTNGFHDIELDENTIKINKFMTFLDHSHVNLNEVVEAIQDIITLYAIWNRYNEMSVKKVLQDMLLNRSV</sequence>
<reference key="1">
    <citation type="journal article" date="2004" name="Nature">
        <title>Genome evolution in yeasts.</title>
        <authorList>
            <person name="Dujon B."/>
            <person name="Sherman D."/>
            <person name="Fischer G."/>
            <person name="Durrens P."/>
            <person name="Casaregola S."/>
            <person name="Lafontaine I."/>
            <person name="de Montigny J."/>
            <person name="Marck C."/>
            <person name="Neuveglise C."/>
            <person name="Talla E."/>
            <person name="Goffard N."/>
            <person name="Frangeul L."/>
            <person name="Aigle M."/>
            <person name="Anthouard V."/>
            <person name="Babour A."/>
            <person name="Barbe V."/>
            <person name="Barnay S."/>
            <person name="Blanchin S."/>
            <person name="Beckerich J.-M."/>
            <person name="Beyne E."/>
            <person name="Bleykasten C."/>
            <person name="Boisrame A."/>
            <person name="Boyer J."/>
            <person name="Cattolico L."/>
            <person name="Confanioleri F."/>
            <person name="de Daruvar A."/>
            <person name="Despons L."/>
            <person name="Fabre E."/>
            <person name="Fairhead C."/>
            <person name="Ferry-Dumazet H."/>
            <person name="Groppi A."/>
            <person name="Hantraye F."/>
            <person name="Hennequin C."/>
            <person name="Jauniaux N."/>
            <person name="Joyet P."/>
            <person name="Kachouri R."/>
            <person name="Kerrest A."/>
            <person name="Koszul R."/>
            <person name="Lemaire M."/>
            <person name="Lesur I."/>
            <person name="Ma L."/>
            <person name="Muller H."/>
            <person name="Nicaud J.-M."/>
            <person name="Nikolski M."/>
            <person name="Oztas S."/>
            <person name="Ozier-Kalogeropoulos O."/>
            <person name="Pellenz S."/>
            <person name="Potier S."/>
            <person name="Richard G.-F."/>
            <person name="Straub M.-L."/>
            <person name="Suleau A."/>
            <person name="Swennen D."/>
            <person name="Tekaia F."/>
            <person name="Wesolowski-Louvel M."/>
            <person name="Westhof E."/>
            <person name="Wirth B."/>
            <person name="Zeniou-Meyer M."/>
            <person name="Zivanovic Y."/>
            <person name="Bolotin-Fukuhara M."/>
            <person name="Thierry A."/>
            <person name="Bouchier C."/>
            <person name="Caudron B."/>
            <person name="Scarpelli C."/>
            <person name="Gaillardin C."/>
            <person name="Weissenbach J."/>
            <person name="Wincker P."/>
            <person name="Souciet J.-L."/>
        </authorList>
    </citation>
    <scope>NUCLEOTIDE SEQUENCE [LARGE SCALE GENOMIC DNA]</scope>
    <source>
        <strain>ATCC 36239 / CBS 767 / BCRC 21394 / JCM 1990 / NBRC 0083 / IGC 2968</strain>
    </source>
</reference>
<organism>
    <name type="scientific">Debaryomyces hansenii (strain ATCC 36239 / CBS 767 / BCRC 21394 / JCM 1990 / NBRC 0083 / IGC 2968)</name>
    <name type="common">Yeast</name>
    <name type="synonym">Torulaspora hansenii</name>
    <dbReference type="NCBI Taxonomy" id="284592"/>
    <lineage>
        <taxon>Eukaryota</taxon>
        <taxon>Fungi</taxon>
        <taxon>Dikarya</taxon>
        <taxon>Ascomycota</taxon>
        <taxon>Saccharomycotina</taxon>
        <taxon>Pichiomycetes</taxon>
        <taxon>Debaryomycetaceae</taxon>
        <taxon>Debaryomyces</taxon>
    </lineage>
</organism>
<keyword id="KW-0010">Activator</keyword>
<keyword id="KW-0195">Cyclin</keyword>
<keyword id="KW-0539">Nucleus</keyword>
<keyword id="KW-1185">Reference proteome</keyword>
<keyword id="KW-0678">Repressor</keyword>
<keyword id="KW-0804">Transcription</keyword>
<keyword id="KW-0805">Transcription regulation</keyword>
<comment type="function">
    <text evidence="1">Component of the SRB8-11 complex. The SRB8-11 complex is a regulatory module of the Mediator complex which is itself involved in regulation of basal and activated RNA polymerase II-dependent transcription. The SRB8-11 complex may be involved in the transcriptional repression of a subset of genes regulated by Mediator. It may inhibit the association of the Mediator complex with RNA polymerase II to form the holoenzyme complex. The SRB8-11 complex phosphorylates the C-terminal domain (CTD) of the largest subunit of RNA polymerase II (By similarity).</text>
</comment>
<comment type="subunit">
    <text evidence="1">Component of the SRB8-11 complex, a regulatory module of the Mediator complex.</text>
</comment>
<comment type="subcellular location">
    <subcellularLocation>
        <location evidence="2">Nucleus</location>
    </subcellularLocation>
</comment>
<comment type="similarity">
    <text evidence="2">Belongs to the cyclin family. Cyclin C subfamily.</text>
</comment>
<accession>Q6BYF8</accession>
<protein>
    <recommendedName>
        <fullName>RNA polymerase II holoenzyme cyclin-like subunit</fullName>
    </recommendedName>
</protein>
<name>SSN8_DEBHA</name>
<evidence type="ECO:0000250" key="1"/>
<evidence type="ECO:0000305" key="2"/>
<proteinExistence type="inferred from homology"/>
<dbReference type="EMBL" id="CR382133">
    <property type="protein sequence ID" value="CAG84722.2"/>
    <property type="molecule type" value="Genomic_DNA"/>
</dbReference>
<dbReference type="RefSeq" id="XP_456761.2">
    <property type="nucleotide sequence ID" value="XM_456761.1"/>
</dbReference>
<dbReference type="SMR" id="Q6BYF8"/>
<dbReference type="FunCoup" id="Q6BYF8">
    <property type="interactions" value="1001"/>
</dbReference>
<dbReference type="STRING" id="284592.Q6BYF8"/>
<dbReference type="GeneID" id="2899553"/>
<dbReference type="KEGG" id="dha:DEHA2A09878g"/>
<dbReference type="VEuPathDB" id="FungiDB:DEHA2A09878g"/>
<dbReference type="eggNOG" id="KOG0794">
    <property type="taxonomic scope" value="Eukaryota"/>
</dbReference>
<dbReference type="HOGENOM" id="CLU_034754_2_1_1"/>
<dbReference type="InParanoid" id="Q6BYF8"/>
<dbReference type="OMA" id="DDGPRYW"/>
<dbReference type="OrthoDB" id="10266018at2759"/>
<dbReference type="Proteomes" id="UP000000599">
    <property type="component" value="Chromosome A"/>
</dbReference>
<dbReference type="GO" id="GO:1990508">
    <property type="term" value="C:CKM complex"/>
    <property type="evidence" value="ECO:0007669"/>
    <property type="project" value="EnsemblFungi"/>
</dbReference>
<dbReference type="GO" id="GO:0016592">
    <property type="term" value="C:mediator complex"/>
    <property type="evidence" value="ECO:0007669"/>
    <property type="project" value="EnsemblFungi"/>
</dbReference>
<dbReference type="GO" id="GO:0016538">
    <property type="term" value="F:cyclin-dependent protein serine/threonine kinase regulator activity"/>
    <property type="evidence" value="ECO:0007669"/>
    <property type="project" value="EnsemblFungi"/>
</dbReference>
<dbReference type="GO" id="GO:0000979">
    <property type="term" value="F:RNA polymerase II core promoter sequence-specific DNA binding"/>
    <property type="evidence" value="ECO:0007669"/>
    <property type="project" value="EnsemblFungi"/>
</dbReference>
<dbReference type="GO" id="GO:0034605">
    <property type="term" value="P:cellular response to heat"/>
    <property type="evidence" value="ECO:0007669"/>
    <property type="project" value="EnsemblFungi"/>
</dbReference>
<dbReference type="GO" id="GO:0051321">
    <property type="term" value="P:meiotic cell cycle"/>
    <property type="evidence" value="ECO:0007669"/>
    <property type="project" value="EnsemblFungi"/>
</dbReference>
<dbReference type="GO" id="GO:0000122">
    <property type="term" value="P:negative regulation of transcription by RNA polymerase II"/>
    <property type="evidence" value="ECO:0007669"/>
    <property type="project" value="EnsemblFungi"/>
</dbReference>
<dbReference type="GO" id="GO:0000411">
    <property type="term" value="P:positive regulation of transcription by galactose"/>
    <property type="evidence" value="ECO:0007669"/>
    <property type="project" value="EnsemblFungi"/>
</dbReference>
<dbReference type="GO" id="GO:0045944">
    <property type="term" value="P:positive regulation of transcription by RNA polymerase II"/>
    <property type="evidence" value="ECO:0007669"/>
    <property type="project" value="EnsemblFungi"/>
</dbReference>
<dbReference type="CDD" id="cd20513">
    <property type="entry name" value="CYCLIN_CCNC_rpt1"/>
    <property type="match status" value="1"/>
</dbReference>
<dbReference type="FunFam" id="1.10.472.10:FF:000077">
    <property type="entry name" value="RNA polymerase II holoenzyme cyclin-like subunit"/>
    <property type="match status" value="1"/>
</dbReference>
<dbReference type="Gene3D" id="1.10.472.10">
    <property type="entry name" value="Cyclin-like"/>
    <property type="match status" value="2"/>
</dbReference>
<dbReference type="InterPro" id="IPR013763">
    <property type="entry name" value="Cyclin-like_dom"/>
</dbReference>
<dbReference type="InterPro" id="IPR036915">
    <property type="entry name" value="Cyclin-like_sf"/>
</dbReference>
<dbReference type="InterPro" id="IPR043198">
    <property type="entry name" value="Cyclin/Ssn8"/>
</dbReference>
<dbReference type="InterPro" id="IPR006671">
    <property type="entry name" value="Cyclin_N"/>
</dbReference>
<dbReference type="PANTHER" id="PTHR10026">
    <property type="entry name" value="CYCLIN"/>
    <property type="match status" value="1"/>
</dbReference>
<dbReference type="Pfam" id="PF00134">
    <property type="entry name" value="Cyclin_N"/>
    <property type="match status" value="1"/>
</dbReference>
<dbReference type="PIRSF" id="PIRSF028758">
    <property type="entry name" value="Cyclin, C/H/G types"/>
    <property type="match status" value="1"/>
</dbReference>
<dbReference type="SMART" id="SM00385">
    <property type="entry name" value="CYCLIN"/>
    <property type="match status" value="1"/>
</dbReference>
<dbReference type="SUPFAM" id="SSF47954">
    <property type="entry name" value="Cyclin-like"/>
    <property type="match status" value="2"/>
</dbReference>